<sequence length="291" mass="33109">MKIKEGYMPFHEYKTYYRIVGEPSADKAPLLIHGGPGSSHNYFELMDDYAETGRQLIMYDQVGCGKSSLPEDPGVYVKETWAEELVALRKFLHLDELHMLGQSWGGMLEMYYLTSFDPQGIKSVMIDGSPASIKLWVQEQHRLIKYLSYEDRAAIAEAERTGDFTNVKYLAANDRYMEKYCWDDPDENSPEPLRRPTNGKRASLIAEGPNEFTENGTISDFDVTDQLHKIHVPVLVTSGTDDLCTPLIAKSVVDHIPGAKWHLFANSRHLALLDQHDEFIHVLDQWLAAND</sequence>
<evidence type="ECO:0000250" key="1"/>
<evidence type="ECO:0000250" key="2">
    <source>
        <dbReference type="UniProtKB" id="O32449"/>
    </source>
</evidence>
<evidence type="ECO:0000250" key="3">
    <source>
        <dbReference type="UniProtKB" id="P52278"/>
    </source>
</evidence>
<evidence type="ECO:0000250" key="4">
    <source>
        <dbReference type="UniProtKB" id="P96084"/>
    </source>
</evidence>
<evidence type="ECO:0000255" key="5"/>
<evidence type="ECO:0000312" key="6">
    <source>
        <dbReference type="EMBL" id="CAR91434.1"/>
    </source>
</evidence>
<proteinExistence type="inferred from homology"/>
<keyword id="KW-0031">Aminopeptidase</keyword>
<keyword id="KW-0378">Hydrolase</keyword>
<keyword id="KW-0645">Protease</keyword>
<gene>
    <name evidence="3" type="primary">pip</name>
    <name evidence="6" type="synonym">pepIP</name>
    <name type="ordered locus">LC705_02595</name>
</gene>
<name>PIP_LACRL</name>
<protein>
    <recommendedName>
        <fullName evidence="6">Proline iminopeptidase</fullName>
        <shortName evidence="3">PIP</shortName>
        <ecNumber>3.4.11.5</ecNumber>
    </recommendedName>
    <alternativeName>
        <fullName evidence="3">Prolyl aminopeptidase</fullName>
        <shortName evidence="3">PAP</shortName>
    </alternativeName>
</protein>
<feature type="chain" id="PRO_0000406327" description="Proline iminopeptidase">
    <location>
        <begin position="1"/>
        <end position="291"/>
    </location>
</feature>
<feature type="domain" description="AB hydrolase-1" evidence="5">
    <location>
        <begin position="30"/>
        <end position="274"/>
    </location>
</feature>
<feature type="active site" description="Nucleophile" evidence="4">
    <location>
        <position position="103"/>
    </location>
</feature>
<feature type="active site" evidence="2">
    <location>
        <position position="242"/>
    </location>
</feature>
<feature type="active site" description="Proton donor" evidence="4">
    <location>
        <position position="269"/>
    </location>
</feature>
<reference evidence="6" key="1">
    <citation type="journal article" date="2009" name="Proc. Natl. Acad. Sci. U.S.A.">
        <title>Comparative genomic analysis of Lactobacillus rhamnosus GG reveals pili containing a human- mucus binding protein.</title>
        <authorList>
            <person name="Kankainen M."/>
            <person name="Paulin L."/>
            <person name="Tynkkynen S."/>
            <person name="von Ossowski I."/>
            <person name="Reunanen J."/>
            <person name="Partanen P."/>
            <person name="Satokari R."/>
            <person name="Vesterlund S."/>
            <person name="Hendrickx A.P."/>
            <person name="Lebeer S."/>
            <person name="De Keersmaecker S.C."/>
            <person name="Vanderleyden J."/>
            <person name="Hamalainen T."/>
            <person name="Laukkanen S."/>
            <person name="Salovuori N."/>
            <person name="Ritari J."/>
            <person name="Alatalo E."/>
            <person name="Korpela R."/>
            <person name="Mattila-Sandholm T."/>
            <person name="Lassig A."/>
            <person name="Hatakka K."/>
            <person name="Kinnunen K.T."/>
            <person name="Karjalainen H."/>
            <person name="Saxelin M."/>
            <person name="Laakso K."/>
            <person name="Surakka A."/>
            <person name="Palva A."/>
            <person name="Salusjarvi T."/>
            <person name="Auvinen P."/>
            <person name="de Vos W.M."/>
        </authorList>
    </citation>
    <scope>NUCLEOTIDE SEQUENCE [LARGE SCALE GENOMIC DNA]</scope>
    <source>
        <strain>Lc 705</strain>
    </source>
</reference>
<dbReference type="EC" id="3.4.11.5"/>
<dbReference type="EMBL" id="FM179323">
    <property type="protein sequence ID" value="CAR91434.1"/>
    <property type="molecule type" value="Genomic_DNA"/>
</dbReference>
<dbReference type="RefSeq" id="WP_014571653.1">
    <property type="nucleotide sequence ID" value="NC_013199.1"/>
</dbReference>
<dbReference type="SMR" id="C7TMK0"/>
<dbReference type="ESTHER" id="lacrl-pip">
    <property type="family name" value="Proline_iminopeptidase"/>
</dbReference>
<dbReference type="KEGG" id="lrl:LC705_02595"/>
<dbReference type="HOGENOM" id="CLU_020336_15_1_9"/>
<dbReference type="BRENDA" id="3.4.11.5">
    <property type="organism ID" value="2891"/>
</dbReference>
<dbReference type="GO" id="GO:0030313">
    <property type="term" value="C:cell envelope"/>
    <property type="evidence" value="ECO:0007669"/>
    <property type="project" value="UniProtKB-SubCell"/>
</dbReference>
<dbReference type="GO" id="GO:0016020">
    <property type="term" value="C:membrane"/>
    <property type="evidence" value="ECO:0007669"/>
    <property type="project" value="TreeGrafter"/>
</dbReference>
<dbReference type="GO" id="GO:0004177">
    <property type="term" value="F:aminopeptidase activity"/>
    <property type="evidence" value="ECO:0007669"/>
    <property type="project" value="UniProtKB-KW"/>
</dbReference>
<dbReference type="GO" id="GO:0006508">
    <property type="term" value="P:proteolysis"/>
    <property type="evidence" value="ECO:0007669"/>
    <property type="project" value="UniProtKB-KW"/>
</dbReference>
<dbReference type="Gene3D" id="3.40.50.1820">
    <property type="entry name" value="alpha/beta hydrolase"/>
    <property type="match status" value="1"/>
</dbReference>
<dbReference type="InterPro" id="IPR000073">
    <property type="entry name" value="AB_hydrolase_1"/>
</dbReference>
<dbReference type="InterPro" id="IPR029058">
    <property type="entry name" value="AB_hydrolase_fold"/>
</dbReference>
<dbReference type="InterPro" id="IPR050266">
    <property type="entry name" value="AB_hydrolase_sf"/>
</dbReference>
<dbReference type="InterPro" id="IPR002410">
    <property type="entry name" value="Peptidase_S33"/>
</dbReference>
<dbReference type="InterPro" id="IPR005945">
    <property type="entry name" value="Pro_imino_pep"/>
</dbReference>
<dbReference type="NCBIfam" id="TIGR01250">
    <property type="entry name" value="pro_imino_pep_2"/>
    <property type="match status" value="1"/>
</dbReference>
<dbReference type="NCBIfam" id="NF045945">
    <property type="entry name" value="ProImpepLactob"/>
    <property type="match status" value="1"/>
</dbReference>
<dbReference type="PANTHER" id="PTHR43798:SF33">
    <property type="entry name" value="HYDROLASE, PUTATIVE (AFU_ORTHOLOGUE AFUA_2G14860)-RELATED"/>
    <property type="match status" value="1"/>
</dbReference>
<dbReference type="PANTHER" id="PTHR43798">
    <property type="entry name" value="MONOACYLGLYCEROL LIPASE"/>
    <property type="match status" value="1"/>
</dbReference>
<dbReference type="Pfam" id="PF00561">
    <property type="entry name" value="Abhydrolase_1"/>
    <property type="match status" value="1"/>
</dbReference>
<dbReference type="PIRSF" id="PIRSF005539">
    <property type="entry name" value="Pept_S33_TRI_F1"/>
    <property type="match status" value="1"/>
</dbReference>
<dbReference type="PRINTS" id="PR00793">
    <property type="entry name" value="PROAMNOPTASE"/>
</dbReference>
<dbReference type="SUPFAM" id="SSF53474">
    <property type="entry name" value="alpha/beta-Hydrolases"/>
    <property type="match status" value="1"/>
</dbReference>
<accession>C7TMK0</accession>
<organism>
    <name type="scientific">Lacticaseibacillus rhamnosus (strain Lc 705)</name>
    <name type="common">Lactobacillus rhamnosus</name>
    <dbReference type="NCBI Taxonomy" id="568704"/>
    <lineage>
        <taxon>Bacteria</taxon>
        <taxon>Bacillati</taxon>
        <taxon>Bacillota</taxon>
        <taxon>Bacilli</taxon>
        <taxon>Lactobacillales</taxon>
        <taxon>Lactobacillaceae</taxon>
        <taxon>Lacticaseibacillus</taxon>
    </lineage>
</organism>
<comment type="function">
    <text evidence="3">Releases the N-terminal proline from various substrates.</text>
</comment>
<comment type="catalytic activity">
    <reaction evidence="3">
        <text>Release of N-terminal proline from a peptide.</text>
        <dbReference type="EC" id="3.4.11.5"/>
    </reaction>
</comment>
<comment type="subcellular location">
    <subcellularLocation>
        <location evidence="1">Cell envelope</location>
    </subcellularLocation>
</comment>
<comment type="similarity">
    <text evidence="5">Belongs to the peptidase S33 family.</text>
</comment>